<name>YQGF_PEDPA</name>
<protein>
    <recommendedName>
        <fullName evidence="1">Putative pre-16S rRNA nuclease</fullName>
        <ecNumber evidence="1">3.1.-.-</ecNumber>
    </recommendedName>
</protein>
<keyword id="KW-0963">Cytoplasm</keyword>
<keyword id="KW-0378">Hydrolase</keyword>
<keyword id="KW-0540">Nuclease</keyword>
<keyword id="KW-0690">Ribosome biogenesis</keyword>
<proteinExistence type="inferred from homology"/>
<gene>
    <name type="ordered locus">PEPE_1261</name>
</gene>
<evidence type="ECO:0000255" key="1">
    <source>
        <dbReference type="HAMAP-Rule" id="MF_00651"/>
    </source>
</evidence>
<organism>
    <name type="scientific">Pediococcus pentosaceus (strain ATCC 25745 / CCUG 21536 / LMG 10740 / 183-1w)</name>
    <dbReference type="NCBI Taxonomy" id="278197"/>
    <lineage>
        <taxon>Bacteria</taxon>
        <taxon>Bacillati</taxon>
        <taxon>Bacillota</taxon>
        <taxon>Bacilli</taxon>
        <taxon>Lactobacillales</taxon>
        <taxon>Lactobacillaceae</taxon>
        <taxon>Pediococcus</taxon>
    </lineage>
</organism>
<feature type="chain" id="PRO_1000072691" description="Putative pre-16S rRNA nuclease">
    <location>
        <begin position="1"/>
        <end position="146"/>
    </location>
</feature>
<reference key="1">
    <citation type="journal article" date="2006" name="Proc. Natl. Acad. Sci. U.S.A.">
        <title>Comparative genomics of the lactic acid bacteria.</title>
        <authorList>
            <person name="Makarova K.S."/>
            <person name="Slesarev A."/>
            <person name="Wolf Y.I."/>
            <person name="Sorokin A."/>
            <person name="Mirkin B."/>
            <person name="Koonin E.V."/>
            <person name="Pavlov A."/>
            <person name="Pavlova N."/>
            <person name="Karamychev V."/>
            <person name="Polouchine N."/>
            <person name="Shakhova V."/>
            <person name="Grigoriev I."/>
            <person name="Lou Y."/>
            <person name="Rohksar D."/>
            <person name="Lucas S."/>
            <person name="Huang K."/>
            <person name="Goodstein D.M."/>
            <person name="Hawkins T."/>
            <person name="Plengvidhya V."/>
            <person name="Welker D."/>
            <person name="Hughes J."/>
            <person name="Goh Y."/>
            <person name="Benson A."/>
            <person name="Baldwin K."/>
            <person name="Lee J.-H."/>
            <person name="Diaz-Muniz I."/>
            <person name="Dosti B."/>
            <person name="Smeianov V."/>
            <person name="Wechter W."/>
            <person name="Barabote R."/>
            <person name="Lorca G."/>
            <person name="Altermann E."/>
            <person name="Barrangou R."/>
            <person name="Ganesan B."/>
            <person name="Xie Y."/>
            <person name="Rawsthorne H."/>
            <person name="Tamir D."/>
            <person name="Parker C."/>
            <person name="Breidt F."/>
            <person name="Broadbent J.R."/>
            <person name="Hutkins R."/>
            <person name="O'Sullivan D."/>
            <person name="Steele J."/>
            <person name="Unlu G."/>
            <person name="Saier M.H. Jr."/>
            <person name="Klaenhammer T."/>
            <person name="Richardson P."/>
            <person name="Kozyavkin S."/>
            <person name="Weimer B.C."/>
            <person name="Mills D.A."/>
        </authorList>
    </citation>
    <scope>NUCLEOTIDE SEQUENCE [LARGE SCALE GENOMIC DNA]</scope>
    <source>
        <strain>ATCC 25745 / CCUG 21536 / LMG 10740 / 183-1w</strain>
    </source>
</reference>
<accession>Q03ES0</accession>
<sequence length="146" mass="16421">MRLMGMDVGSRTVGISVSDQLGWTAQGVEIVPINEDEEIFGIERVKELVKEYDVVGFVLGLPKNMNNTEGPRVEAARNYGKLLEETFGLPIDFQDERLTTVEAERMLIEQADTSRSKRKKVIDKLAASLILENYLNGHGKLIDRLK</sequence>
<comment type="function">
    <text evidence="1">Could be a nuclease involved in processing of the 5'-end of pre-16S rRNA.</text>
</comment>
<comment type="subcellular location">
    <subcellularLocation>
        <location evidence="1">Cytoplasm</location>
    </subcellularLocation>
</comment>
<comment type="similarity">
    <text evidence="1">Belongs to the YqgF nuclease family.</text>
</comment>
<dbReference type="EC" id="3.1.-.-" evidence="1"/>
<dbReference type="EMBL" id="CP000422">
    <property type="protein sequence ID" value="ABJ68302.1"/>
    <property type="molecule type" value="Genomic_DNA"/>
</dbReference>
<dbReference type="SMR" id="Q03ES0"/>
<dbReference type="STRING" id="278197.PEPE_1261"/>
<dbReference type="GeneID" id="33061762"/>
<dbReference type="KEGG" id="ppe:PEPE_1261"/>
<dbReference type="eggNOG" id="COG0816">
    <property type="taxonomic scope" value="Bacteria"/>
</dbReference>
<dbReference type="HOGENOM" id="CLU_098240_2_0_9"/>
<dbReference type="OrthoDB" id="9796140at2"/>
<dbReference type="Proteomes" id="UP000000773">
    <property type="component" value="Chromosome"/>
</dbReference>
<dbReference type="GO" id="GO:0005829">
    <property type="term" value="C:cytosol"/>
    <property type="evidence" value="ECO:0007669"/>
    <property type="project" value="TreeGrafter"/>
</dbReference>
<dbReference type="GO" id="GO:0004518">
    <property type="term" value="F:nuclease activity"/>
    <property type="evidence" value="ECO:0007669"/>
    <property type="project" value="UniProtKB-KW"/>
</dbReference>
<dbReference type="GO" id="GO:0000967">
    <property type="term" value="P:rRNA 5'-end processing"/>
    <property type="evidence" value="ECO:0007669"/>
    <property type="project" value="UniProtKB-UniRule"/>
</dbReference>
<dbReference type="CDD" id="cd16964">
    <property type="entry name" value="YqgF"/>
    <property type="match status" value="1"/>
</dbReference>
<dbReference type="Gene3D" id="3.30.420.140">
    <property type="entry name" value="YqgF/RNase H-like domain"/>
    <property type="match status" value="1"/>
</dbReference>
<dbReference type="HAMAP" id="MF_00651">
    <property type="entry name" value="Nuclease_YqgF"/>
    <property type="match status" value="1"/>
</dbReference>
<dbReference type="InterPro" id="IPR012337">
    <property type="entry name" value="RNaseH-like_sf"/>
</dbReference>
<dbReference type="InterPro" id="IPR005227">
    <property type="entry name" value="YqgF"/>
</dbReference>
<dbReference type="InterPro" id="IPR006641">
    <property type="entry name" value="YqgF/RNaseH-like_dom"/>
</dbReference>
<dbReference type="InterPro" id="IPR037027">
    <property type="entry name" value="YqgF/RNaseH-like_dom_sf"/>
</dbReference>
<dbReference type="NCBIfam" id="TIGR00250">
    <property type="entry name" value="RNAse_H_YqgF"/>
    <property type="match status" value="1"/>
</dbReference>
<dbReference type="PANTHER" id="PTHR33317">
    <property type="entry name" value="POLYNUCLEOTIDYL TRANSFERASE, RIBONUCLEASE H-LIKE SUPERFAMILY PROTEIN"/>
    <property type="match status" value="1"/>
</dbReference>
<dbReference type="PANTHER" id="PTHR33317:SF4">
    <property type="entry name" value="POLYNUCLEOTIDYL TRANSFERASE, RIBONUCLEASE H-LIKE SUPERFAMILY PROTEIN"/>
    <property type="match status" value="1"/>
</dbReference>
<dbReference type="Pfam" id="PF03652">
    <property type="entry name" value="RuvX"/>
    <property type="match status" value="1"/>
</dbReference>
<dbReference type="SMART" id="SM00732">
    <property type="entry name" value="YqgFc"/>
    <property type="match status" value="1"/>
</dbReference>
<dbReference type="SUPFAM" id="SSF53098">
    <property type="entry name" value="Ribonuclease H-like"/>
    <property type="match status" value="1"/>
</dbReference>